<name>BIOB_HELPJ</name>
<comment type="function">
    <text evidence="1">Catalyzes the conversion of dethiobiotin (DTB) to biotin by the insertion of a sulfur atom into dethiobiotin via a radical-based mechanism.</text>
</comment>
<comment type="catalytic activity">
    <reaction evidence="1">
        <text>(4R,5S)-dethiobiotin + (sulfur carrier)-SH + 2 reduced [2Fe-2S]-[ferredoxin] + 2 S-adenosyl-L-methionine = (sulfur carrier)-H + biotin + 2 5'-deoxyadenosine + 2 L-methionine + 2 oxidized [2Fe-2S]-[ferredoxin]</text>
        <dbReference type="Rhea" id="RHEA:22060"/>
        <dbReference type="Rhea" id="RHEA-COMP:10000"/>
        <dbReference type="Rhea" id="RHEA-COMP:10001"/>
        <dbReference type="Rhea" id="RHEA-COMP:14737"/>
        <dbReference type="Rhea" id="RHEA-COMP:14739"/>
        <dbReference type="ChEBI" id="CHEBI:17319"/>
        <dbReference type="ChEBI" id="CHEBI:29917"/>
        <dbReference type="ChEBI" id="CHEBI:33737"/>
        <dbReference type="ChEBI" id="CHEBI:33738"/>
        <dbReference type="ChEBI" id="CHEBI:57586"/>
        <dbReference type="ChEBI" id="CHEBI:57844"/>
        <dbReference type="ChEBI" id="CHEBI:59789"/>
        <dbReference type="ChEBI" id="CHEBI:64428"/>
        <dbReference type="ChEBI" id="CHEBI:149473"/>
        <dbReference type="EC" id="2.8.1.6"/>
    </reaction>
</comment>
<comment type="cofactor">
    <cofactor evidence="1">
        <name>[4Fe-4S] cluster</name>
        <dbReference type="ChEBI" id="CHEBI:49883"/>
    </cofactor>
    <text evidence="1">Binds 1 [4Fe-4S] cluster. The cluster is coordinated with 3 cysteines and an exchangeable S-adenosyl-L-methionine.</text>
</comment>
<comment type="cofactor">
    <cofactor evidence="1">
        <name>[2Fe-2S] cluster</name>
        <dbReference type="ChEBI" id="CHEBI:190135"/>
    </cofactor>
    <text evidence="1">Binds 1 [2Fe-2S] cluster. The cluster is coordinated with 3 cysteines and 1 arginine.</text>
</comment>
<comment type="pathway">
    <text evidence="1">Cofactor biosynthesis; biotin biosynthesis; biotin from 7,8-diaminononanoate: step 2/2.</text>
</comment>
<comment type="subunit">
    <text evidence="1">Homodimer.</text>
</comment>
<comment type="similarity">
    <text evidence="1">Belongs to the radical SAM superfamily. Biotin synthase family.</text>
</comment>
<sequence length="282" mass="31490">MQEIFLCSISNVRSGDCKEDCAYCTQSSHHQGAIKRYKFKDEKVVLQEARALRELGALGFCLVTSGRELDDEKCEYIAKLAKAINKEELGLHLIACCGRADLEQLEFLRDAGIHSYNHNLETSQNFFPKICTTHTWEERFITCENALRAGLGLCSGGIFGLNESWEDRIEMLRALASLSPHTTPINFFIKNPVLPIDAETLSADEALECVLLAKEFLPNARLMVAGGREVVFKDNDKQEAKLFEYGINAVVLGDYLTTKGKAPKKDIEKLLSYGLTMATSCH</sequence>
<feature type="chain" id="PRO_0000185556" description="Biotin synthase">
    <location>
        <begin position="1"/>
        <end position="282"/>
    </location>
</feature>
<feature type="domain" description="Radical SAM core" evidence="2">
    <location>
        <begin position="1"/>
        <end position="228"/>
    </location>
</feature>
<feature type="binding site" evidence="1">
    <location>
        <position position="17"/>
    </location>
    <ligand>
        <name>[4Fe-4S] cluster</name>
        <dbReference type="ChEBI" id="CHEBI:49883"/>
        <note>4Fe-4S-S-AdoMet</note>
    </ligand>
</feature>
<feature type="binding site" evidence="1">
    <location>
        <position position="21"/>
    </location>
    <ligand>
        <name>[4Fe-4S] cluster</name>
        <dbReference type="ChEBI" id="CHEBI:49883"/>
        <note>4Fe-4S-S-AdoMet</note>
    </ligand>
</feature>
<feature type="binding site" evidence="1">
    <location>
        <position position="24"/>
    </location>
    <ligand>
        <name>[4Fe-4S] cluster</name>
        <dbReference type="ChEBI" id="CHEBI:49883"/>
        <note>4Fe-4S-S-AdoMet</note>
    </ligand>
</feature>
<feature type="binding site" evidence="1">
    <location>
        <position position="61"/>
    </location>
    <ligand>
        <name>[2Fe-2S] cluster</name>
        <dbReference type="ChEBI" id="CHEBI:190135"/>
    </ligand>
</feature>
<feature type="binding site" evidence="1">
    <location>
        <position position="96"/>
    </location>
    <ligand>
        <name>[2Fe-2S] cluster</name>
        <dbReference type="ChEBI" id="CHEBI:190135"/>
    </ligand>
</feature>
<feature type="binding site" evidence="1">
    <location>
        <position position="154"/>
    </location>
    <ligand>
        <name>[2Fe-2S] cluster</name>
        <dbReference type="ChEBI" id="CHEBI:190135"/>
    </ligand>
</feature>
<feature type="binding site" evidence="1">
    <location>
        <position position="221"/>
    </location>
    <ligand>
        <name>[2Fe-2S] cluster</name>
        <dbReference type="ChEBI" id="CHEBI:190135"/>
    </ligand>
</feature>
<protein>
    <recommendedName>
        <fullName evidence="1">Biotin synthase</fullName>
        <ecNumber evidence="1">2.8.1.6</ecNumber>
    </recommendedName>
</protein>
<gene>
    <name evidence="1" type="primary">bioB</name>
    <name type="ordered locus">jhp_1298</name>
</gene>
<keyword id="KW-0001">2Fe-2S</keyword>
<keyword id="KW-0004">4Fe-4S</keyword>
<keyword id="KW-0093">Biotin biosynthesis</keyword>
<keyword id="KW-0408">Iron</keyword>
<keyword id="KW-0411">Iron-sulfur</keyword>
<keyword id="KW-0479">Metal-binding</keyword>
<keyword id="KW-0949">S-adenosyl-L-methionine</keyword>
<keyword id="KW-0808">Transferase</keyword>
<accession>Q9ZJK8</accession>
<dbReference type="EC" id="2.8.1.6" evidence="1"/>
<dbReference type="EMBL" id="AE001439">
    <property type="protein sequence ID" value="AAD06876.1"/>
    <property type="molecule type" value="Genomic_DNA"/>
</dbReference>
<dbReference type="PIR" id="H71823">
    <property type="entry name" value="H71823"/>
</dbReference>
<dbReference type="RefSeq" id="WP_001155616.1">
    <property type="nucleotide sequence ID" value="NC_000921.1"/>
</dbReference>
<dbReference type="SMR" id="Q9ZJK8"/>
<dbReference type="KEGG" id="hpj:jhp_1298"/>
<dbReference type="PATRIC" id="fig|85963.30.peg.1266"/>
<dbReference type="eggNOG" id="COG0502">
    <property type="taxonomic scope" value="Bacteria"/>
</dbReference>
<dbReference type="UniPathway" id="UPA00078">
    <property type="reaction ID" value="UER00162"/>
</dbReference>
<dbReference type="Proteomes" id="UP000000804">
    <property type="component" value="Chromosome"/>
</dbReference>
<dbReference type="GO" id="GO:0051537">
    <property type="term" value="F:2 iron, 2 sulfur cluster binding"/>
    <property type="evidence" value="ECO:0007669"/>
    <property type="project" value="UniProtKB-KW"/>
</dbReference>
<dbReference type="GO" id="GO:0051539">
    <property type="term" value="F:4 iron, 4 sulfur cluster binding"/>
    <property type="evidence" value="ECO:0007669"/>
    <property type="project" value="UniProtKB-KW"/>
</dbReference>
<dbReference type="GO" id="GO:0004076">
    <property type="term" value="F:biotin synthase activity"/>
    <property type="evidence" value="ECO:0007669"/>
    <property type="project" value="UniProtKB-UniRule"/>
</dbReference>
<dbReference type="GO" id="GO:0005506">
    <property type="term" value="F:iron ion binding"/>
    <property type="evidence" value="ECO:0007669"/>
    <property type="project" value="UniProtKB-UniRule"/>
</dbReference>
<dbReference type="GO" id="GO:0009102">
    <property type="term" value="P:biotin biosynthetic process"/>
    <property type="evidence" value="ECO:0007669"/>
    <property type="project" value="UniProtKB-UniRule"/>
</dbReference>
<dbReference type="CDD" id="cd01335">
    <property type="entry name" value="Radical_SAM"/>
    <property type="match status" value="1"/>
</dbReference>
<dbReference type="FunFam" id="3.20.20.70:FF:000158">
    <property type="entry name" value="Biotin synthase"/>
    <property type="match status" value="1"/>
</dbReference>
<dbReference type="Gene3D" id="3.20.20.70">
    <property type="entry name" value="Aldolase class I"/>
    <property type="match status" value="1"/>
</dbReference>
<dbReference type="HAMAP" id="MF_01694">
    <property type="entry name" value="BioB"/>
    <property type="match status" value="1"/>
</dbReference>
<dbReference type="InterPro" id="IPR013785">
    <property type="entry name" value="Aldolase_TIM"/>
</dbReference>
<dbReference type="InterPro" id="IPR010722">
    <property type="entry name" value="BATS_dom"/>
</dbReference>
<dbReference type="InterPro" id="IPR002684">
    <property type="entry name" value="Biotin_synth/BioAB"/>
</dbReference>
<dbReference type="InterPro" id="IPR024177">
    <property type="entry name" value="Biotin_synthase"/>
</dbReference>
<dbReference type="InterPro" id="IPR006638">
    <property type="entry name" value="Elp3/MiaA/NifB-like_rSAM"/>
</dbReference>
<dbReference type="InterPro" id="IPR007197">
    <property type="entry name" value="rSAM"/>
</dbReference>
<dbReference type="NCBIfam" id="TIGR00433">
    <property type="entry name" value="bioB"/>
    <property type="match status" value="1"/>
</dbReference>
<dbReference type="NCBIfam" id="NF006308">
    <property type="entry name" value="PRK08508.1"/>
    <property type="match status" value="1"/>
</dbReference>
<dbReference type="PANTHER" id="PTHR22976">
    <property type="entry name" value="BIOTIN SYNTHASE"/>
    <property type="match status" value="1"/>
</dbReference>
<dbReference type="PANTHER" id="PTHR22976:SF2">
    <property type="entry name" value="BIOTIN SYNTHASE, MITOCHONDRIAL"/>
    <property type="match status" value="1"/>
</dbReference>
<dbReference type="Pfam" id="PF06968">
    <property type="entry name" value="BATS"/>
    <property type="match status" value="1"/>
</dbReference>
<dbReference type="Pfam" id="PF04055">
    <property type="entry name" value="Radical_SAM"/>
    <property type="match status" value="1"/>
</dbReference>
<dbReference type="PIRSF" id="PIRSF001619">
    <property type="entry name" value="Biotin_synth"/>
    <property type="match status" value="1"/>
</dbReference>
<dbReference type="SFLD" id="SFLDG01278">
    <property type="entry name" value="biotin_synthase_like"/>
    <property type="match status" value="1"/>
</dbReference>
<dbReference type="SFLD" id="SFLDS00029">
    <property type="entry name" value="Radical_SAM"/>
    <property type="match status" value="1"/>
</dbReference>
<dbReference type="SMART" id="SM00876">
    <property type="entry name" value="BATS"/>
    <property type="match status" value="1"/>
</dbReference>
<dbReference type="SMART" id="SM00729">
    <property type="entry name" value="Elp3"/>
    <property type="match status" value="1"/>
</dbReference>
<dbReference type="SUPFAM" id="SSF102114">
    <property type="entry name" value="Radical SAM enzymes"/>
    <property type="match status" value="1"/>
</dbReference>
<dbReference type="PROSITE" id="PS51918">
    <property type="entry name" value="RADICAL_SAM"/>
    <property type="match status" value="1"/>
</dbReference>
<proteinExistence type="inferred from homology"/>
<organism>
    <name type="scientific">Helicobacter pylori (strain J99 / ATCC 700824)</name>
    <name type="common">Campylobacter pylori J99</name>
    <dbReference type="NCBI Taxonomy" id="85963"/>
    <lineage>
        <taxon>Bacteria</taxon>
        <taxon>Pseudomonadati</taxon>
        <taxon>Campylobacterota</taxon>
        <taxon>Epsilonproteobacteria</taxon>
        <taxon>Campylobacterales</taxon>
        <taxon>Helicobacteraceae</taxon>
        <taxon>Helicobacter</taxon>
    </lineage>
</organism>
<reference key="1">
    <citation type="journal article" date="1999" name="Nature">
        <title>Genomic sequence comparison of two unrelated isolates of the human gastric pathogen Helicobacter pylori.</title>
        <authorList>
            <person name="Alm R.A."/>
            <person name="Ling L.-S.L."/>
            <person name="Moir D.T."/>
            <person name="King B.L."/>
            <person name="Brown E.D."/>
            <person name="Doig P.C."/>
            <person name="Smith D.R."/>
            <person name="Noonan B."/>
            <person name="Guild B.C."/>
            <person name="deJonge B.L."/>
            <person name="Carmel G."/>
            <person name="Tummino P.J."/>
            <person name="Caruso A."/>
            <person name="Uria-Nickelsen M."/>
            <person name="Mills D.M."/>
            <person name="Ives C."/>
            <person name="Gibson R."/>
            <person name="Merberg D."/>
            <person name="Mills S.D."/>
            <person name="Jiang Q."/>
            <person name="Taylor D.E."/>
            <person name="Vovis G.F."/>
            <person name="Trust T.J."/>
        </authorList>
    </citation>
    <scope>NUCLEOTIDE SEQUENCE [LARGE SCALE GENOMIC DNA]</scope>
    <source>
        <strain>J99 / ATCC 700824</strain>
    </source>
</reference>
<evidence type="ECO:0000255" key="1">
    <source>
        <dbReference type="HAMAP-Rule" id="MF_01694"/>
    </source>
</evidence>
<evidence type="ECO:0000255" key="2">
    <source>
        <dbReference type="PROSITE-ProRule" id="PRU01266"/>
    </source>
</evidence>